<comment type="function">
    <text evidence="2">Chemotactic factor that mediates inflammatory response by attracting neutrophils, basophils, and T-cells to clear pathogens and protect the host from infection. Also plays an important role in neutrophil activation. Released in response to an inflammatory stimulus, exerts its effect by binding to the G-protein-coupled receptors CXCR1 and CXCR2, primarily found in neutrophils, monocytes and endothelial cells. G-protein heterotrimer (alpha, beta, gamma subunits) constitutively binds to CXCR1/CXCR2 receptor and activation by IL8 leads to beta and gamma subunits release from Galpha (GNAI2 in neutrophils) and activation of several downstream signaling pathways including PI3K and MAPK pathways.</text>
</comment>
<comment type="subunit">
    <text evidence="2">Homodimer. Interacts with TNFAIP6 (via Link domain); this interaction interferes with chemokine binding to glycosaminoglycans.</text>
</comment>
<comment type="subcellular location">
    <subcellularLocation>
        <location>Secreted</location>
    </subcellularLocation>
</comment>
<comment type="tissue specificity">
    <text>Alveolar macrophages.</text>
</comment>
<comment type="induction">
    <text>By lipopolysaccharide (LPS).</text>
</comment>
<comment type="PTM">
    <text evidence="1">Citrullination at Arg-27 prevents proteolysis, and dampens tissue inflammation, it also enhances leukocytosis, possibly through impaired chemokine clearance from the blood circulation.</text>
</comment>
<comment type="similarity">
    <text evidence="5">Belongs to the intercrine alpha (chemokine CxC) family.</text>
</comment>
<evidence type="ECO:0000250" key="1"/>
<evidence type="ECO:0000250" key="2">
    <source>
        <dbReference type="UniProtKB" id="P10145"/>
    </source>
</evidence>
<evidence type="ECO:0000269" key="3">
    <source>
    </source>
</evidence>
<evidence type="ECO:0000269" key="4">
    <source>
    </source>
</evidence>
<evidence type="ECO:0000305" key="5"/>
<name>IL8_PIG</name>
<accession>P26894</accession>
<accession>P22951</accession>
<dbReference type="EMBL" id="M86923">
    <property type="protein sequence ID" value="AAA16616.1"/>
    <property type="molecule type" value="mRNA"/>
</dbReference>
<dbReference type="EMBL" id="X61151">
    <property type="protein sequence ID" value="CAA43461.1"/>
    <property type="molecule type" value="mRNA"/>
</dbReference>
<dbReference type="EMBL" id="M99367">
    <property type="protein sequence ID" value="AAA92576.1"/>
    <property type="molecule type" value="mRNA"/>
</dbReference>
<dbReference type="PIR" id="A39819">
    <property type="entry name" value="A39819"/>
</dbReference>
<dbReference type="PIR" id="A53096">
    <property type="entry name" value="A53096"/>
</dbReference>
<dbReference type="RefSeq" id="NP_999032.1">
    <property type="nucleotide sequence ID" value="NM_213867.1"/>
</dbReference>
<dbReference type="RefSeq" id="XP_003362006.1">
    <property type="nucleotide sequence ID" value="XM_003361958.3"/>
</dbReference>
<dbReference type="SMR" id="P26894"/>
<dbReference type="FunCoup" id="P26894">
    <property type="interactions" value="174"/>
</dbReference>
<dbReference type="STRING" id="9823.ENSSSCP00000009554"/>
<dbReference type="PaxDb" id="9823-ENSSSCP00000009554"/>
<dbReference type="Ensembl" id="ENSSSCT00000009807.5">
    <property type="protein sequence ID" value="ENSSSCP00000009554.2"/>
    <property type="gene ID" value="ENSSSCG00000008953.5"/>
</dbReference>
<dbReference type="Ensembl" id="ENSSSCT00025023573.1">
    <property type="protein sequence ID" value="ENSSSCP00025009879.1"/>
    <property type="gene ID" value="ENSSSCG00025017428.1"/>
</dbReference>
<dbReference type="Ensembl" id="ENSSSCT00030050860.1">
    <property type="protein sequence ID" value="ENSSSCP00030023129.1"/>
    <property type="gene ID" value="ENSSSCG00030036565.1"/>
</dbReference>
<dbReference type="Ensembl" id="ENSSSCT00035096660.1">
    <property type="protein sequence ID" value="ENSSSCP00035040729.1"/>
    <property type="gene ID" value="ENSSSCG00035071462.1"/>
</dbReference>
<dbReference type="Ensembl" id="ENSSSCT00040103852.1">
    <property type="protein sequence ID" value="ENSSSCP00040047190.1"/>
    <property type="gene ID" value="ENSSSCG00040074984.1"/>
</dbReference>
<dbReference type="Ensembl" id="ENSSSCT00045016902.1">
    <property type="protein sequence ID" value="ENSSSCP00045011673.1"/>
    <property type="gene ID" value="ENSSSCG00045009964.1"/>
</dbReference>
<dbReference type="Ensembl" id="ENSSSCT00055061067.1">
    <property type="protein sequence ID" value="ENSSSCP00055048957.1"/>
    <property type="gene ID" value="ENSSSCG00055030636.1"/>
</dbReference>
<dbReference type="Ensembl" id="ENSSSCT00060053953.1">
    <property type="protein sequence ID" value="ENSSSCP00060023007.1"/>
    <property type="gene ID" value="ENSSSCG00060039839.1"/>
</dbReference>
<dbReference type="Ensembl" id="ENSSSCT00070012189.1">
    <property type="protein sequence ID" value="ENSSSCP00070010025.1"/>
    <property type="gene ID" value="ENSSSCG00070006372.1"/>
</dbReference>
<dbReference type="Ensembl" id="ENSSSCT00090021207">
    <property type="protein sequence ID" value="ENSSSCP00090013050"/>
    <property type="gene ID" value="ENSSSCG00090012063"/>
</dbReference>
<dbReference type="Ensembl" id="ENSSSCT00105064786">
    <property type="protein sequence ID" value="ENSSSCP00105046139"/>
    <property type="gene ID" value="ENSSSCG00105033962"/>
</dbReference>
<dbReference type="Ensembl" id="ENSSSCT00110032383">
    <property type="protein sequence ID" value="ENSSSCP00110021948"/>
    <property type="gene ID" value="ENSSSCG00110016996"/>
</dbReference>
<dbReference type="Ensembl" id="ENSSSCT00115028724">
    <property type="protein sequence ID" value="ENSSSCP00115027251"/>
    <property type="gene ID" value="ENSSSCG00115016400"/>
</dbReference>
<dbReference type="Ensembl" id="ENSSSCT00130031868">
    <property type="protein sequence ID" value="ENSSSCP00130022140"/>
    <property type="gene ID" value="ENSSSCG00130016148"/>
</dbReference>
<dbReference type="GeneID" id="396880"/>
<dbReference type="KEGG" id="ssc:396880"/>
<dbReference type="CTD" id="3576"/>
<dbReference type="VGNC" id="VGNC:87106">
    <property type="gene designation" value="CXCL8"/>
</dbReference>
<dbReference type="eggNOG" id="ENOG502S7MM">
    <property type="taxonomic scope" value="Eukaryota"/>
</dbReference>
<dbReference type="GeneTree" id="ENSGT00940000160757"/>
<dbReference type="HOGENOM" id="CLU_143902_3_0_1"/>
<dbReference type="InParanoid" id="P26894"/>
<dbReference type="OMA" id="IGTELRC"/>
<dbReference type="OrthoDB" id="9937393at2759"/>
<dbReference type="TreeFam" id="TF333433"/>
<dbReference type="Reactome" id="R-SSC-375276">
    <property type="pathway name" value="Peptide ligand-binding receptors"/>
</dbReference>
<dbReference type="Reactome" id="R-SSC-380108">
    <property type="pathway name" value="Chemokine receptors bind chemokines"/>
</dbReference>
<dbReference type="Reactome" id="R-SSC-418594">
    <property type="pathway name" value="G alpha (i) signalling events"/>
</dbReference>
<dbReference type="Proteomes" id="UP000008227">
    <property type="component" value="Chromosome 8"/>
</dbReference>
<dbReference type="Proteomes" id="UP000314985">
    <property type="component" value="Chromosome 8"/>
</dbReference>
<dbReference type="Proteomes" id="UP000694570">
    <property type="component" value="Unplaced"/>
</dbReference>
<dbReference type="Proteomes" id="UP000694571">
    <property type="component" value="Unplaced"/>
</dbReference>
<dbReference type="Proteomes" id="UP000694720">
    <property type="component" value="Unplaced"/>
</dbReference>
<dbReference type="Proteomes" id="UP000694722">
    <property type="component" value="Unplaced"/>
</dbReference>
<dbReference type="Proteomes" id="UP000694723">
    <property type="component" value="Unplaced"/>
</dbReference>
<dbReference type="Proteomes" id="UP000694724">
    <property type="component" value="Unplaced"/>
</dbReference>
<dbReference type="Proteomes" id="UP000694725">
    <property type="component" value="Unplaced"/>
</dbReference>
<dbReference type="Proteomes" id="UP000694726">
    <property type="component" value="Unplaced"/>
</dbReference>
<dbReference type="Proteomes" id="UP000694727">
    <property type="component" value="Unplaced"/>
</dbReference>
<dbReference type="Proteomes" id="UP000694728">
    <property type="component" value="Unplaced"/>
</dbReference>
<dbReference type="Bgee" id="ENSSSCG00000008953">
    <property type="expression patterns" value="Expressed in ileum and 22 other cell types or tissues"/>
</dbReference>
<dbReference type="ExpressionAtlas" id="P26894">
    <property type="expression patterns" value="baseline and differential"/>
</dbReference>
<dbReference type="GO" id="GO:0005615">
    <property type="term" value="C:extracellular space"/>
    <property type="evidence" value="ECO:0000318"/>
    <property type="project" value="GO_Central"/>
</dbReference>
<dbReference type="GO" id="GO:0008009">
    <property type="term" value="F:chemokine activity"/>
    <property type="evidence" value="ECO:0000318"/>
    <property type="project" value="GO_Central"/>
</dbReference>
<dbReference type="GO" id="GO:0045236">
    <property type="term" value="F:CXCR chemokine receptor binding"/>
    <property type="evidence" value="ECO:0000318"/>
    <property type="project" value="GO_Central"/>
</dbReference>
<dbReference type="GO" id="GO:0008201">
    <property type="term" value="F:heparin binding"/>
    <property type="evidence" value="ECO:0000250"/>
    <property type="project" value="UniProtKB"/>
</dbReference>
<dbReference type="GO" id="GO:0005153">
    <property type="term" value="F:interleukin-8 receptor binding"/>
    <property type="evidence" value="ECO:0007669"/>
    <property type="project" value="Ensembl"/>
</dbReference>
<dbReference type="GO" id="GO:0061844">
    <property type="term" value="P:antimicrobial humoral immune response mediated by antimicrobial peptide"/>
    <property type="evidence" value="ECO:0000318"/>
    <property type="project" value="GO_Central"/>
</dbReference>
<dbReference type="GO" id="GO:0044344">
    <property type="term" value="P:cellular response to fibroblast growth factor stimulus"/>
    <property type="evidence" value="ECO:0007669"/>
    <property type="project" value="Ensembl"/>
</dbReference>
<dbReference type="GO" id="GO:0071347">
    <property type="term" value="P:cellular response to interleukin-1"/>
    <property type="evidence" value="ECO:0007669"/>
    <property type="project" value="Ensembl"/>
</dbReference>
<dbReference type="GO" id="GO:0071222">
    <property type="term" value="P:cellular response to lipopolysaccharide"/>
    <property type="evidence" value="ECO:0000318"/>
    <property type="project" value="GO_Central"/>
</dbReference>
<dbReference type="GO" id="GO:0071356">
    <property type="term" value="P:cellular response to tumor necrosis factor"/>
    <property type="evidence" value="ECO:0007669"/>
    <property type="project" value="Ensembl"/>
</dbReference>
<dbReference type="GO" id="GO:0048566">
    <property type="term" value="P:embryonic digestive tract development"/>
    <property type="evidence" value="ECO:0007669"/>
    <property type="project" value="Ensembl"/>
</dbReference>
<dbReference type="GO" id="GO:0050930">
    <property type="term" value="P:induction of positive chemotaxis"/>
    <property type="evidence" value="ECO:0007669"/>
    <property type="project" value="Ensembl"/>
</dbReference>
<dbReference type="GO" id="GO:0006954">
    <property type="term" value="P:inflammatory response"/>
    <property type="evidence" value="ECO:0000318"/>
    <property type="project" value="GO_Central"/>
</dbReference>
<dbReference type="GO" id="GO:0035556">
    <property type="term" value="P:intracellular signal transduction"/>
    <property type="evidence" value="ECO:0007669"/>
    <property type="project" value="Ensembl"/>
</dbReference>
<dbReference type="GO" id="GO:0060354">
    <property type="term" value="P:negative regulation of cell adhesion molecule production"/>
    <property type="evidence" value="ECO:0007669"/>
    <property type="project" value="Ensembl"/>
</dbReference>
<dbReference type="GO" id="GO:0045744">
    <property type="term" value="P:negative regulation of G protein-coupled receptor signaling pathway"/>
    <property type="evidence" value="ECO:0007669"/>
    <property type="project" value="Ensembl"/>
</dbReference>
<dbReference type="GO" id="GO:0010629">
    <property type="term" value="P:negative regulation of gene expression"/>
    <property type="evidence" value="ECO:0007669"/>
    <property type="project" value="Ensembl"/>
</dbReference>
<dbReference type="GO" id="GO:0042119">
    <property type="term" value="P:neutrophil activation"/>
    <property type="evidence" value="ECO:0007669"/>
    <property type="project" value="Ensembl"/>
</dbReference>
<dbReference type="GO" id="GO:0030593">
    <property type="term" value="P:neutrophil chemotaxis"/>
    <property type="evidence" value="ECO:0000250"/>
    <property type="project" value="UniProtKB"/>
</dbReference>
<dbReference type="GO" id="GO:0045766">
    <property type="term" value="P:positive regulation of angiogenesis"/>
    <property type="evidence" value="ECO:0007669"/>
    <property type="project" value="Ensembl"/>
</dbReference>
<dbReference type="GO" id="GO:0010628">
    <property type="term" value="P:positive regulation of gene expression"/>
    <property type="evidence" value="ECO:0007669"/>
    <property type="project" value="Ensembl"/>
</dbReference>
<dbReference type="GO" id="GO:0031623">
    <property type="term" value="P:receptor internalization"/>
    <property type="evidence" value="ECO:0007669"/>
    <property type="project" value="Ensembl"/>
</dbReference>
<dbReference type="GO" id="GO:0030155">
    <property type="term" value="P:regulation of cell adhesion"/>
    <property type="evidence" value="ECO:0007669"/>
    <property type="project" value="Ensembl"/>
</dbReference>
<dbReference type="GO" id="GO:2000535">
    <property type="term" value="P:regulation of entry of bacterium into host cell"/>
    <property type="evidence" value="ECO:0007669"/>
    <property type="project" value="Ensembl"/>
</dbReference>
<dbReference type="GO" id="GO:0045091">
    <property type="term" value="P:regulation of single stranded viral RNA replication via double stranded DNA intermediate"/>
    <property type="evidence" value="ECO:0007669"/>
    <property type="project" value="Ensembl"/>
</dbReference>
<dbReference type="GO" id="GO:0034976">
    <property type="term" value="P:response to endoplasmic reticulum stress"/>
    <property type="evidence" value="ECO:0007669"/>
    <property type="project" value="Ensembl"/>
</dbReference>
<dbReference type="CDD" id="cd00273">
    <property type="entry name" value="Chemokine_CXC"/>
    <property type="match status" value="1"/>
</dbReference>
<dbReference type="FunFam" id="2.40.50.40:FF:000004">
    <property type="entry name" value="C-X-C motif chemokine"/>
    <property type="match status" value="1"/>
</dbReference>
<dbReference type="Gene3D" id="2.40.50.40">
    <property type="match status" value="1"/>
</dbReference>
<dbReference type="InterPro" id="IPR039809">
    <property type="entry name" value="Chemokine_b/g/d"/>
</dbReference>
<dbReference type="InterPro" id="IPR001089">
    <property type="entry name" value="Chemokine_CXC"/>
</dbReference>
<dbReference type="InterPro" id="IPR018048">
    <property type="entry name" value="Chemokine_CXC_CS"/>
</dbReference>
<dbReference type="InterPro" id="IPR001811">
    <property type="entry name" value="Chemokine_IL8-like_dom"/>
</dbReference>
<dbReference type="InterPro" id="IPR033899">
    <property type="entry name" value="CXC_Chemokine_domain"/>
</dbReference>
<dbReference type="InterPro" id="IPR036048">
    <property type="entry name" value="Interleukin_8-like_sf"/>
</dbReference>
<dbReference type="PANTHER" id="PTHR12015:SF200">
    <property type="entry name" value="INTERLEUKIN-8"/>
    <property type="match status" value="1"/>
</dbReference>
<dbReference type="PANTHER" id="PTHR12015">
    <property type="entry name" value="SMALL INDUCIBLE CYTOKINE A"/>
    <property type="match status" value="1"/>
</dbReference>
<dbReference type="Pfam" id="PF00048">
    <property type="entry name" value="IL8"/>
    <property type="match status" value="1"/>
</dbReference>
<dbReference type="PRINTS" id="PR00436">
    <property type="entry name" value="INTERLEUKIN8"/>
</dbReference>
<dbReference type="PRINTS" id="PR00437">
    <property type="entry name" value="SMALLCYTKCXC"/>
</dbReference>
<dbReference type="SMART" id="SM00199">
    <property type="entry name" value="SCY"/>
    <property type="match status" value="1"/>
</dbReference>
<dbReference type="SUPFAM" id="SSF54117">
    <property type="entry name" value="Interleukin 8-like chemokines"/>
    <property type="match status" value="1"/>
</dbReference>
<dbReference type="PROSITE" id="PS00471">
    <property type="entry name" value="SMALL_CYTOKINES_CXC"/>
    <property type="match status" value="1"/>
</dbReference>
<reference key="1">
    <citation type="journal article" date="1994" name="J. Biol. Chem.">
        <title>Regulation of interleukin-8 expression in porcine alveolar macrophages by bacterial lipopolysaccharide.</title>
        <authorList>
            <person name="Lin G."/>
            <person name="Pearson A.E."/>
            <person name="Scamurra R.W."/>
            <person name="Zhou Y."/>
            <person name="Baarsch M.J."/>
            <person name="Weiss D.J."/>
            <person name="Murtaugh M.P."/>
        </authorList>
    </citation>
    <scope>NUCLEOTIDE SEQUENCE [MRNA]</scope>
</reference>
<reference key="2">
    <citation type="submission" date="1991-07" db="EMBL/GenBank/DDBJ databases">
        <authorList>
            <person name="Sanjanwala M."/>
        </authorList>
    </citation>
    <scope>NUCLEOTIDE SEQUENCE [MRNA]</scope>
</reference>
<reference key="3">
    <citation type="journal article" date="1992" name="Biochemistry">
        <title>Molecular cloning of porcine alveolar macrophage-derived neutrophil chemotactic factors I and II; identification of porcine IL-8 and another intercrine-alpha protein.</title>
        <authorList>
            <person name="Goodman R.B."/>
            <person name="Foster D.C."/>
            <person name="Mathewes S.L."/>
            <person name="Osborn S.G."/>
            <person name="Kuijper J.L."/>
            <person name="Forstrom J.W."/>
            <person name="Martin T.R."/>
        </authorList>
    </citation>
    <scope>NUCLEOTIDE SEQUENCE [MRNA]</scope>
    <scope>PROTEIN SEQUENCE OF 26-45</scope>
    <source>
        <tissue>Lung</tissue>
    </source>
</reference>
<reference key="4">
    <citation type="submission" date="1996-03" db="EMBL/GenBank/DDBJ databases">
        <authorList>
            <person name="Goodman R.B."/>
        </authorList>
    </citation>
    <scope>SEQUENCE REVISION TO 23</scope>
</reference>
<reference key="5">
    <citation type="journal article" date="1991" name="J. Biol. Chem.">
        <title>Identification of two neutrophil chemotactic peptides produced by porcine alveolar macrophages.</title>
        <authorList>
            <person name="Goodman R.B."/>
            <person name="Forstrom J.W."/>
            <person name="Osborn S.G."/>
            <person name="Chi E.Y."/>
            <person name="Martin T.R."/>
        </authorList>
    </citation>
    <scope>PROTEIN SEQUENCE OF 26-45</scope>
    <source>
        <strain>Yorkshire</strain>
    </source>
</reference>
<gene>
    <name type="primary">CXCL8</name>
    <name type="synonym">IL8</name>
</gene>
<organism>
    <name type="scientific">Sus scrofa</name>
    <name type="common">Pig</name>
    <dbReference type="NCBI Taxonomy" id="9823"/>
    <lineage>
        <taxon>Eukaryota</taxon>
        <taxon>Metazoa</taxon>
        <taxon>Chordata</taxon>
        <taxon>Craniata</taxon>
        <taxon>Vertebrata</taxon>
        <taxon>Euteleostomi</taxon>
        <taxon>Mammalia</taxon>
        <taxon>Eutheria</taxon>
        <taxon>Laurasiatheria</taxon>
        <taxon>Artiodactyla</taxon>
        <taxon>Suina</taxon>
        <taxon>Suidae</taxon>
        <taxon>Sus</taxon>
    </lineage>
</organism>
<protein>
    <recommendedName>
        <fullName>Interleukin-8</fullName>
        <shortName>IL-8</shortName>
    </recommendedName>
    <alternativeName>
        <fullName>Alveolar macrophage chemotactic factor I</fullName>
        <shortName>AMCF-I</shortName>
    </alternativeName>
    <alternativeName>
        <fullName>C-X-C motif chemokine 8</fullName>
    </alternativeName>
    <alternativeName>
        <fullName>Chemokine (C-X-C motif) ligand 8</fullName>
    </alternativeName>
</protein>
<proteinExistence type="evidence at protein level"/>
<feature type="signal peptide" evidence="3 4">
    <location>
        <begin position="1"/>
        <end position="25"/>
    </location>
</feature>
<feature type="chain" id="PRO_0000005134" description="Interleukin-8">
    <location>
        <begin position="26"/>
        <end position="103"/>
    </location>
</feature>
<feature type="modified residue" description="Citrulline" evidence="1">
    <location>
        <position position="27"/>
    </location>
</feature>
<feature type="disulfide bond" evidence="1">
    <location>
        <begin position="34"/>
        <end position="61"/>
    </location>
</feature>
<feature type="disulfide bond" evidence="1">
    <location>
        <begin position="36"/>
        <end position="77"/>
    </location>
</feature>
<feature type="sequence conflict" description="In Ref. 5; AA sequence." evidence="5" ref="5">
    <original>RC</original>
    <variation>CR</variation>
    <location>
        <begin position="33"/>
        <end position="34"/>
    </location>
</feature>
<feature type="sequence conflict" description="In Ref. 2; CAA43461." evidence="5" ref="2">
    <original>K</original>
    <variation>KK</variation>
    <location>
        <position position="87"/>
    </location>
</feature>
<keyword id="KW-0145">Chemotaxis</keyword>
<keyword id="KW-0164">Citrullination</keyword>
<keyword id="KW-0202">Cytokine</keyword>
<keyword id="KW-0903">Direct protein sequencing</keyword>
<keyword id="KW-1015">Disulfide bond</keyword>
<keyword id="KW-0395">Inflammatory response</keyword>
<keyword id="KW-1185">Reference proteome</keyword>
<keyword id="KW-0964">Secreted</keyword>
<keyword id="KW-0732">Signal</keyword>
<sequence>MTSKLAVAFLAVFLLSAALCEAAVLARVSAELRCQCINTHSTPFHPKFIKELRVIESGPHCENSEIIVKLVNGKEVCLDPKEKWVQKVVQIFLKRTEKQQQQQ</sequence>